<comment type="function">
    <text evidence="1">Catalyzes the hydrolysis of N-succinyl-L,L-diaminopimelic acid (SDAP), forming succinate and LL-2,6-diaminopimelate (DAP), an intermediate involved in the bacterial biosynthesis of lysine and meso-diaminopimelic acid, an essential component of bacterial cell walls.</text>
</comment>
<comment type="catalytic activity">
    <reaction evidence="1">
        <text>N-succinyl-(2S,6S)-2,6-diaminopimelate + H2O = (2S,6S)-2,6-diaminopimelate + succinate</text>
        <dbReference type="Rhea" id="RHEA:22608"/>
        <dbReference type="ChEBI" id="CHEBI:15377"/>
        <dbReference type="ChEBI" id="CHEBI:30031"/>
        <dbReference type="ChEBI" id="CHEBI:57609"/>
        <dbReference type="ChEBI" id="CHEBI:58087"/>
        <dbReference type="EC" id="3.5.1.18"/>
    </reaction>
</comment>
<comment type="cofactor">
    <cofactor evidence="1">
        <name>Zn(2+)</name>
        <dbReference type="ChEBI" id="CHEBI:29105"/>
    </cofactor>
    <cofactor evidence="1">
        <name>Co(2+)</name>
        <dbReference type="ChEBI" id="CHEBI:48828"/>
    </cofactor>
    <text evidence="1">Binds 2 Zn(2+) or Co(2+) ions per subunit.</text>
</comment>
<comment type="pathway">
    <text evidence="1">Amino-acid biosynthesis; L-lysine biosynthesis via DAP pathway; LL-2,6-diaminopimelate from (S)-tetrahydrodipicolinate (succinylase route): step 3/3.</text>
</comment>
<comment type="subunit">
    <text evidence="1">Homodimer.</text>
</comment>
<comment type="similarity">
    <text evidence="1">Belongs to the peptidase M20A family. DapE subfamily.</text>
</comment>
<keyword id="KW-0028">Amino-acid biosynthesis</keyword>
<keyword id="KW-0170">Cobalt</keyword>
<keyword id="KW-0220">Diaminopimelate biosynthesis</keyword>
<keyword id="KW-0378">Hydrolase</keyword>
<keyword id="KW-0457">Lysine biosynthesis</keyword>
<keyword id="KW-0479">Metal-binding</keyword>
<keyword id="KW-1185">Reference proteome</keyword>
<keyword id="KW-0862">Zinc</keyword>
<organism>
    <name type="scientific">Methylobacillus flagellatus (strain ATCC 51484 / DSM 6875 / VKM B-1610 / KT)</name>
    <dbReference type="NCBI Taxonomy" id="265072"/>
    <lineage>
        <taxon>Bacteria</taxon>
        <taxon>Pseudomonadati</taxon>
        <taxon>Pseudomonadota</taxon>
        <taxon>Betaproteobacteria</taxon>
        <taxon>Nitrosomonadales</taxon>
        <taxon>Methylophilaceae</taxon>
        <taxon>Methylobacillus</taxon>
    </lineage>
</organism>
<dbReference type="EC" id="3.5.1.18" evidence="1"/>
<dbReference type="EMBL" id="CP000284">
    <property type="protein sequence ID" value="ABE50136.1"/>
    <property type="molecule type" value="Genomic_DNA"/>
</dbReference>
<dbReference type="RefSeq" id="WP_011480090.1">
    <property type="nucleotide sequence ID" value="NC_007947.1"/>
</dbReference>
<dbReference type="SMR" id="Q1H051"/>
<dbReference type="STRING" id="265072.Mfla_1869"/>
<dbReference type="KEGG" id="mfa:Mfla_1869"/>
<dbReference type="eggNOG" id="COG0624">
    <property type="taxonomic scope" value="Bacteria"/>
</dbReference>
<dbReference type="HOGENOM" id="CLU_021802_4_0_4"/>
<dbReference type="OrthoDB" id="9809784at2"/>
<dbReference type="UniPathway" id="UPA00034">
    <property type="reaction ID" value="UER00021"/>
</dbReference>
<dbReference type="Proteomes" id="UP000002440">
    <property type="component" value="Chromosome"/>
</dbReference>
<dbReference type="GO" id="GO:0008777">
    <property type="term" value="F:acetylornithine deacetylase activity"/>
    <property type="evidence" value="ECO:0007669"/>
    <property type="project" value="TreeGrafter"/>
</dbReference>
<dbReference type="GO" id="GO:0050897">
    <property type="term" value="F:cobalt ion binding"/>
    <property type="evidence" value="ECO:0007669"/>
    <property type="project" value="UniProtKB-UniRule"/>
</dbReference>
<dbReference type="GO" id="GO:0009014">
    <property type="term" value="F:succinyl-diaminopimelate desuccinylase activity"/>
    <property type="evidence" value="ECO:0007669"/>
    <property type="project" value="UniProtKB-UniRule"/>
</dbReference>
<dbReference type="GO" id="GO:0008270">
    <property type="term" value="F:zinc ion binding"/>
    <property type="evidence" value="ECO:0007669"/>
    <property type="project" value="UniProtKB-UniRule"/>
</dbReference>
<dbReference type="GO" id="GO:0019877">
    <property type="term" value="P:diaminopimelate biosynthetic process"/>
    <property type="evidence" value="ECO:0007669"/>
    <property type="project" value="UniProtKB-UniRule"/>
</dbReference>
<dbReference type="GO" id="GO:0006526">
    <property type="term" value="P:L-arginine biosynthetic process"/>
    <property type="evidence" value="ECO:0007669"/>
    <property type="project" value="TreeGrafter"/>
</dbReference>
<dbReference type="GO" id="GO:0009089">
    <property type="term" value="P:lysine biosynthetic process via diaminopimelate"/>
    <property type="evidence" value="ECO:0007669"/>
    <property type="project" value="UniProtKB-UniRule"/>
</dbReference>
<dbReference type="CDD" id="cd03891">
    <property type="entry name" value="M20_DapE_proteobac"/>
    <property type="match status" value="1"/>
</dbReference>
<dbReference type="FunFam" id="3.30.70.360:FF:000011">
    <property type="entry name" value="Succinyl-diaminopimelate desuccinylase"/>
    <property type="match status" value="1"/>
</dbReference>
<dbReference type="FunFam" id="3.40.630.10:FF:000005">
    <property type="entry name" value="Succinyl-diaminopimelate desuccinylase"/>
    <property type="match status" value="1"/>
</dbReference>
<dbReference type="Gene3D" id="3.40.630.10">
    <property type="entry name" value="Zn peptidases"/>
    <property type="match status" value="2"/>
</dbReference>
<dbReference type="HAMAP" id="MF_01690">
    <property type="entry name" value="DapE"/>
    <property type="match status" value="1"/>
</dbReference>
<dbReference type="InterPro" id="IPR036264">
    <property type="entry name" value="Bact_exopeptidase_dim_dom"/>
</dbReference>
<dbReference type="InterPro" id="IPR005941">
    <property type="entry name" value="DapE_proteobac"/>
</dbReference>
<dbReference type="InterPro" id="IPR002933">
    <property type="entry name" value="Peptidase_M20"/>
</dbReference>
<dbReference type="InterPro" id="IPR011650">
    <property type="entry name" value="Peptidase_M20_dimer"/>
</dbReference>
<dbReference type="InterPro" id="IPR050072">
    <property type="entry name" value="Peptidase_M20A"/>
</dbReference>
<dbReference type="NCBIfam" id="TIGR01246">
    <property type="entry name" value="dapE_proteo"/>
    <property type="match status" value="1"/>
</dbReference>
<dbReference type="NCBIfam" id="NF009557">
    <property type="entry name" value="PRK13009.1"/>
    <property type="match status" value="1"/>
</dbReference>
<dbReference type="PANTHER" id="PTHR43808">
    <property type="entry name" value="ACETYLORNITHINE DEACETYLASE"/>
    <property type="match status" value="1"/>
</dbReference>
<dbReference type="PANTHER" id="PTHR43808:SF31">
    <property type="entry name" value="N-ACETYL-L-CITRULLINE DEACETYLASE"/>
    <property type="match status" value="1"/>
</dbReference>
<dbReference type="Pfam" id="PF07687">
    <property type="entry name" value="M20_dimer"/>
    <property type="match status" value="1"/>
</dbReference>
<dbReference type="Pfam" id="PF01546">
    <property type="entry name" value="Peptidase_M20"/>
    <property type="match status" value="1"/>
</dbReference>
<dbReference type="SUPFAM" id="SSF55031">
    <property type="entry name" value="Bacterial exopeptidase dimerisation domain"/>
    <property type="match status" value="1"/>
</dbReference>
<dbReference type="SUPFAM" id="SSF53187">
    <property type="entry name" value="Zn-dependent exopeptidases"/>
    <property type="match status" value="1"/>
</dbReference>
<evidence type="ECO:0000255" key="1">
    <source>
        <dbReference type="HAMAP-Rule" id="MF_01690"/>
    </source>
</evidence>
<accession>Q1H051</accession>
<protein>
    <recommendedName>
        <fullName evidence="1">Succinyl-diaminopimelate desuccinylase</fullName>
        <shortName evidence="1">SDAP desuccinylase</shortName>
        <ecNumber evidence="1">3.5.1.18</ecNumber>
    </recommendedName>
    <alternativeName>
        <fullName evidence="1">N-succinyl-LL-2,6-diaminoheptanedioate amidohydrolase</fullName>
    </alternativeName>
</protein>
<sequence length="375" mass="40491">MSRTLELAKDLIARKSVTPDDAGCQELLISRLEPLGFSIERLRFGDVDNFYARRGNTGPLLVFAGHTDVVPTGPVAQWHTPPFTPTVKDGMLYGRGAADMKTSLAAFITAIEAFVADHPDHPGSIGLIITSDEEGVAINGTVKVVETLKARNELIDYCIVGEPTSSKVVGDMIKNGRRGSLSGKLTVKGIQGHIAYPHLVKNPIHMAAPAIKELSETIWDEGNEYFPPTSWQISNIHGGTGATNVVPGEVEILFNFRFSTASTAENLKQRVHAILDRHQLEYDLAWELSGKPFLTPRGSLVTAISSAIDQAFGVTPALSTSGGTSDGRFIADIAGQIVEFGPLNATIHKLNECVAVADIEPLRRTYQLTLEALLK</sequence>
<gene>
    <name evidence="1" type="primary">dapE</name>
    <name type="ordered locus">Mfla_1869</name>
</gene>
<feature type="chain" id="PRO_0000375611" description="Succinyl-diaminopimelate desuccinylase">
    <location>
        <begin position="1"/>
        <end position="375"/>
    </location>
</feature>
<feature type="active site" evidence="1">
    <location>
        <position position="68"/>
    </location>
</feature>
<feature type="active site" description="Proton acceptor" evidence="1">
    <location>
        <position position="133"/>
    </location>
</feature>
<feature type="binding site" evidence="1">
    <location>
        <position position="66"/>
    </location>
    <ligand>
        <name>Zn(2+)</name>
        <dbReference type="ChEBI" id="CHEBI:29105"/>
        <label>1</label>
    </ligand>
</feature>
<feature type="binding site" evidence="1">
    <location>
        <position position="99"/>
    </location>
    <ligand>
        <name>Zn(2+)</name>
        <dbReference type="ChEBI" id="CHEBI:29105"/>
        <label>1</label>
    </ligand>
</feature>
<feature type="binding site" evidence="1">
    <location>
        <position position="99"/>
    </location>
    <ligand>
        <name>Zn(2+)</name>
        <dbReference type="ChEBI" id="CHEBI:29105"/>
        <label>2</label>
    </ligand>
</feature>
<feature type="binding site" evidence="1">
    <location>
        <position position="134"/>
    </location>
    <ligand>
        <name>Zn(2+)</name>
        <dbReference type="ChEBI" id="CHEBI:29105"/>
        <label>2</label>
    </ligand>
</feature>
<feature type="binding site" evidence="1">
    <location>
        <position position="162"/>
    </location>
    <ligand>
        <name>Zn(2+)</name>
        <dbReference type="ChEBI" id="CHEBI:29105"/>
        <label>1</label>
    </ligand>
</feature>
<feature type="binding site" evidence="1">
    <location>
        <position position="348"/>
    </location>
    <ligand>
        <name>Zn(2+)</name>
        <dbReference type="ChEBI" id="CHEBI:29105"/>
        <label>2</label>
    </ligand>
</feature>
<reference key="1">
    <citation type="submission" date="2006-03" db="EMBL/GenBank/DDBJ databases">
        <title>Complete sequence of Methylobacillus flagellatus KT.</title>
        <authorList>
            <consortium name="US DOE Joint Genome Institute"/>
            <person name="Copeland A."/>
            <person name="Lucas S."/>
            <person name="Lapidus A."/>
            <person name="Barry K."/>
            <person name="Detter J.C."/>
            <person name="Glavina del Rio T."/>
            <person name="Hammon N."/>
            <person name="Israni S."/>
            <person name="Dalin E."/>
            <person name="Tice H."/>
            <person name="Pitluck S."/>
            <person name="Brettin T."/>
            <person name="Bruce D."/>
            <person name="Han C."/>
            <person name="Tapia R."/>
            <person name="Saunders E."/>
            <person name="Gilna P."/>
            <person name="Schmutz J."/>
            <person name="Larimer F."/>
            <person name="Land M."/>
            <person name="Kyrpides N."/>
            <person name="Anderson I."/>
            <person name="Richardson P."/>
        </authorList>
    </citation>
    <scope>NUCLEOTIDE SEQUENCE [LARGE SCALE GENOMIC DNA]</scope>
    <source>
        <strain>ATCC 51484 / DSM 6875 / VKM B-1610 / KT</strain>
    </source>
</reference>
<name>DAPE_METFK</name>
<proteinExistence type="inferred from homology"/>